<gene>
    <name evidence="1" type="primary">rpsR</name>
    <name type="ordered locus">COXBURSA331_A1086</name>
</gene>
<comment type="function">
    <text evidence="1">Binds as a heterodimer with protein bS6 to the central domain of the 16S rRNA, where it helps stabilize the platform of the 30S subunit.</text>
</comment>
<comment type="subunit">
    <text evidence="1">Part of the 30S ribosomal subunit. Forms a tight heterodimer with protein bS6.</text>
</comment>
<comment type="similarity">
    <text evidence="1">Belongs to the bacterial ribosomal protein bS18 family.</text>
</comment>
<feature type="chain" id="PRO_1000078699" description="Small ribosomal subunit protein bS18">
    <location>
        <begin position="1"/>
        <end position="73"/>
    </location>
</feature>
<proteinExistence type="inferred from homology"/>
<name>RS18_COXBR</name>
<evidence type="ECO:0000255" key="1">
    <source>
        <dbReference type="HAMAP-Rule" id="MF_00270"/>
    </source>
</evidence>
<evidence type="ECO:0000305" key="2"/>
<accession>A9ND52</accession>
<protein>
    <recommendedName>
        <fullName evidence="1">Small ribosomal subunit protein bS18</fullName>
    </recommendedName>
    <alternativeName>
        <fullName evidence="2">30S ribosomal protein S18</fullName>
    </alternativeName>
</protein>
<keyword id="KW-0687">Ribonucleoprotein</keyword>
<keyword id="KW-0689">Ribosomal protein</keyword>
<keyword id="KW-0694">RNA-binding</keyword>
<keyword id="KW-0699">rRNA-binding</keyword>
<reference key="1">
    <citation type="submission" date="2007-11" db="EMBL/GenBank/DDBJ databases">
        <title>Genome sequencing of phylogenetically and phenotypically diverse Coxiella burnetii isolates.</title>
        <authorList>
            <person name="Seshadri R."/>
            <person name="Samuel J.E."/>
        </authorList>
    </citation>
    <scope>NUCLEOTIDE SEQUENCE [LARGE SCALE GENOMIC DNA]</scope>
    <source>
        <strain>RSA 331 / Henzerling II</strain>
    </source>
</reference>
<sequence>MSFRRKKFCAFDAKNLQEIDYKDVNTLKDYIMESGRVVPSRITGTCAKHQRQISRAIKLARYLALLPYCDTHQ</sequence>
<dbReference type="EMBL" id="CP000890">
    <property type="protein sequence ID" value="ABX77270.1"/>
    <property type="molecule type" value="Genomic_DNA"/>
</dbReference>
<dbReference type="RefSeq" id="WP_005768821.1">
    <property type="nucleotide sequence ID" value="NC_010117.1"/>
</dbReference>
<dbReference type="SMR" id="A9ND52"/>
<dbReference type="KEGG" id="cbs:COXBURSA331_A1086"/>
<dbReference type="HOGENOM" id="CLU_148710_2_3_6"/>
<dbReference type="GO" id="GO:0022627">
    <property type="term" value="C:cytosolic small ribosomal subunit"/>
    <property type="evidence" value="ECO:0007669"/>
    <property type="project" value="TreeGrafter"/>
</dbReference>
<dbReference type="GO" id="GO:0070181">
    <property type="term" value="F:small ribosomal subunit rRNA binding"/>
    <property type="evidence" value="ECO:0007669"/>
    <property type="project" value="TreeGrafter"/>
</dbReference>
<dbReference type="GO" id="GO:0003735">
    <property type="term" value="F:structural constituent of ribosome"/>
    <property type="evidence" value="ECO:0007669"/>
    <property type="project" value="InterPro"/>
</dbReference>
<dbReference type="GO" id="GO:0006412">
    <property type="term" value="P:translation"/>
    <property type="evidence" value="ECO:0007669"/>
    <property type="project" value="UniProtKB-UniRule"/>
</dbReference>
<dbReference type="FunFam" id="4.10.640.10:FF:000010">
    <property type="entry name" value="30S ribosomal protein S18"/>
    <property type="match status" value="1"/>
</dbReference>
<dbReference type="Gene3D" id="4.10.640.10">
    <property type="entry name" value="Ribosomal protein S18"/>
    <property type="match status" value="1"/>
</dbReference>
<dbReference type="HAMAP" id="MF_00270">
    <property type="entry name" value="Ribosomal_bS18"/>
    <property type="match status" value="1"/>
</dbReference>
<dbReference type="InterPro" id="IPR001648">
    <property type="entry name" value="Ribosomal_bS18"/>
</dbReference>
<dbReference type="InterPro" id="IPR036870">
    <property type="entry name" value="Ribosomal_bS18_sf"/>
</dbReference>
<dbReference type="NCBIfam" id="TIGR00165">
    <property type="entry name" value="S18"/>
    <property type="match status" value="1"/>
</dbReference>
<dbReference type="PANTHER" id="PTHR13479">
    <property type="entry name" value="30S RIBOSOMAL PROTEIN S18"/>
    <property type="match status" value="1"/>
</dbReference>
<dbReference type="PANTHER" id="PTHR13479:SF40">
    <property type="entry name" value="SMALL RIBOSOMAL SUBUNIT PROTEIN BS18M"/>
    <property type="match status" value="1"/>
</dbReference>
<dbReference type="Pfam" id="PF01084">
    <property type="entry name" value="Ribosomal_S18"/>
    <property type="match status" value="1"/>
</dbReference>
<dbReference type="PRINTS" id="PR00974">
    <property type="entry name" value="RIBOSOMALS18"/>
</dbReference>
<dbReference type="SUPFAM" id="SSF46911">
    <property type="entry name" value="Ribosomal protein S18"/>
    <property type="match status" value="1"/>
</dbReference>
<organism>
    <name type="scientific">Coxiella burnetii (strain RSA 331 / Henzerling II)</name>
    <dbReference type="NCBI Taxonomy" id="360115"/>
    <lineage>
        <taxon>Bacteria</taxon>
        <taxon>Pseudomonadati</taxon>
        <taxon>Pseudomonadota</taxon>
        <taxon>Gammaproteobacteria</taxon>
        <taxon>Legionellales</taxon>
        <taxon>Coxiellaceae</taxon>
        <taxon>Coxiella</taxon>
    </lineage>
</organism>